<comment type="function">
    <text evidence="1 8">May be required to maintain the proliferative capacity of stem cells (By similarity). Stabilizes MDM2 by preventing its ubiquitination, and hence proteasomal degradation.</text>
</comment>
<comment type="subunit">
    <text evidence="3 8">Interacts with MDM2; this interaction stabilizes MDM2 (PubMed:21132010). Interaction with MDM2 occurs in the nucleoplasm and is triggered by a nucleolar release mechanism, such as mitosis-induced nucleolar disassembly (PubMed:21132010). Indirectly interacts with TP53, via MDM2-binding (By similarity). Interacts with TSC22D1 isoform 2 (By similarity).</text>
</comment>
<comment type="subcellular location">
    <subcellularLocation>
        <location evidence="8">Nucleus</location>
    </subcellularLocation>
    <subcellularLocation>
        <location evidence="7">Nucleus</location>
        <location evidence="7">Nucleolus</location>
    </subcellularLocation>
    <text evidence="2">Shuttles between the nucleus and nucleolus.</text>
</comment>
<comment type="alternative products">
    <event type="alternative splicing"/>
    <isoform>
        <id>Q8CI11-1</id>
        <name>1</name>
        <name>Long</name>
        <sequence type="displayed"/>
    </isoform>
    <isoform>
        <id>Q8CI11-2</id>
        <name>2</name>
        <name>Short</name>
        <sequence type="described" ref="VSP_013412"/>
    </isoform>
</comment>
<comment type="tissue specificity">
    <text evidence="7">Expressed in the adult bone marrow population that is enriched in hematopoietic stem cells.</text>
</comment>
<comment type="developmental stage">
    <text evidence="7">Expressed at 8.5 dpc and 10.5 dpc in the cerebral cortex; expression declines rapidly from this point.</text>
</comment>
<comment type="domain">
    <text evidence="1">The basic domain (B) allows nucleolar localization in the absence of GTP. The intermediate domain (I) inhibits nucleolar localization by the B domain and is required for exit from the nucleolus. Exit from the nucleolus to the nucleoplasm requires both the I and the acidic (A) domains, and may be triggered by GTP hydrolysis (By similarity).</text>
</comment>
<comment type="domain">
    <text>In contrast to other GTP-binding proteins, this family is characterized by a circular permutation of the GTPase motifs described by a G4-G1-G3 pattern.</text>
</comment>
<comment type="similarity">
    <text evidence="5">Belongs to the TRAFAC class YlqF/YawG GTPase family.</text>
</comment>
<reference key="1">
    <citation type="journal article" date="2002" name="Genes Dev.">
        <title>A nucleolar mechanism controlling cell proliferation in stem and cancer cells.</title>
        <authorList>
            <person name="Tsai R.Y.L."/>
            <person name="McKay R.D.G."/>
        </authorList>
    </citation>
    <scope>NUCLEOTIDE SEQUENCE [MRNA] (ISOFORMS 1 AND 2)</scope>
    <scope>SUBCELLULAR LOCATION</scope>
    <scope>DEVELOPMENTAL STAGE</scope>
    <scope>TISSUE SPECIFICITY</scope>
    <source>
        <strain>129/SvJ</strain>
    </source>
</reference>
<reference key="2">
    <citation type="journal article" date="2005" name="Science">
        <title>The transcriptional landscape of the mammalian genome.</title>
        <authorList>
            <person name="Carninci P."/>
            <person name="Kasukawa T."/>
            <person name="Katayama S."/>
            <person name="Gough J."/>
            <person name="Frith M.C."/>
            <person name="Maeda N."/>
            <person name="Oyama R."/>
            <person name="Ravasi T."/>
            <person name="Lenhard B."/>
            <person name="Wells C."/>
            <person name="Kodzius R."/>
            <person name="Shimokawa K."/>
            <person name="Bajic V.B."/>
            <person name="Brenner S.E."/>
            <person name="Batalov S."/>
            <person name="Forrest A.R."/>
            <person name="Zavolan M."/>
            <person name="Davis M.J."/>
            <person name="Wilming L.G."/>
            <person name="Aidinis V."/>
            <person name="Allen J.E."/>
            <person name="Ambesi-Impiombato A."/>
            <person name="Apweiler R."/>
            <person name="Aturaliya R.N."/>
            <person name="Bailey T.L."/>
            <person name="Bansal M."/>
            <person name="Baxter L."/>
            <person name="Beisel K.W."/>
            <person name="Bersano T."/>
            <person name="Bono H."/>
            <person name="Chalk A.M."/>
            <person name="Chiu K.P."/>
            <person name="Choudhary V."/>
            <person name="Christoffels A."/>
            <person name="Clutterbuck D.R."/>
            <person name="Crowe M.L."/>
            <person name="Dalla E."/>
            <person name="Dalrymple B.P."/>
            <person name="de Bono B."/>
            <person name="Della Gatta G."/>
            <person name="di Bernardo D."/>
            <person name="Down T."/>
            <person name="Engstrom P."/>
            <person name="Fagiolini M."/>
            <person name="Faulkner G."/>
            <person name="Fletcher C.F."/>
            <person name="Fukushima T."/>
            <person name="Furuno M."/>
            <person name="Futaki S."/>
            <person name="Gariboldi M."/>
            <person name="Georgii-Hemming P."/>
            <person name="Gingeras T.R."/>
            <person name="Gojobori T."/>
            <person name="Green R.E."/>
            <person name="Gustincich S."/>
            <person name="Harbers M."/>
            <person name="Hayashi Y."/>
            <person name="Hensch T.K."/>
            <person name="Hirokawa N."/>
            <person name="Hill D."/>
            <person name="Huminiecki L."/>
            <person name="Iacono M."/>
            <person name="Ikeo K."/>
            <person name="Iwama A."/>
            <person name="Ishikawa T."/>
            <person name="Jakt M."/>
            <person name="Kanapin A."/>
            <person name="Katoh M."/>
            <person name="Kawasawa Y."/>
            <person name="Kelso J."/>
            <person name="Kitamura H."/>
            <person name="Kitano H."/>
            <person name="Kollias G."/>
            <person name="Krishnan S.P."/>
            <person name="Kruger A."/>
            <person name="Kummerfeld S.K."/>
            <person name="Kurochkin I.V."/>
            <person name="Lareau L.F."/>
            <person name="Lazarevic D."/>
            <person name="Lipovich L."/>
            <person name="Liu J."/>
            <person name="Liuni S."/>
            <person name="McWilliam S."/>
            <person name="Madan Babu M."/>
            <person name="Madera M."/>
            <person name="Marchionni L."/>
            <person name="Matsuda H."/>
            <person name="Matsuzawa S."/>
            <person name="Miki H."/>
            <person name="Mignone F."/>
            <person name="Miyake S."/>
            <person name="Morris K."/>
            <person name="Mottagui-Tabar S."/>
            <person name="Mulder N."/>
            <person name="Nakano N."/>
            <person name="Nakauchi H."/>
            <person name="Ng P."/>
            <person name="Nilsson R."/>
            <person name="Nishiguchi S."/>
            <person name="Nishikawa S."/>
            <person name="Nori F."/>
            <person name="Ohara O."/>
            <person name="Okazaki Y."/>
            <person name="Orlando V."/>
            <person name="Pang K.C."/>
            <person name="Pavan W.J."/>
            <person name="Pavesi G."/>
            <person name="Pesole G."/>
            <person name="Petrovsky N."/>
            <person name="Piazza S."/>
            <person name="Reed J."/>
            <person name="Reid J.F."/>
            <person name="Ring B.Z."/>
            <person name="Ringwald M."/>
            <person name="Rost B."/>
            <person name="Ruan Y."/>
            <person name="Salzberg S.L."/>
            <person name="Sandelin A."/>
            <person name="Schneider C."/>
            <person name="Schoenbach C."/>
            <person name="Sekiguchi K."/>
            <person name="Semple C.A."/>
            <person name="Seno S."/>
            <person name="Sessa L."/>
            <person name="Sheng Y."/>
            <person name="Shibata Y."/>
            <person name="Shimada H."/>
            <person name="Shimada K."/>
            <person name="Silva D."/>
            <person name="Sinclair B."/>
            <person name="Sperling S."/>
            <person name="Stupka E."/>
            <person name="Sugiura K."/>
            <person name="Sultana R."/>
            <person name="Takenaka Y."/>
            <person name="Taki K."/>
            <person name="Tammoja K."/>
            <person name="Tan S.L."/>
            <person name="Tang S."/>
            <person name="Taylor M.S."/>
            <person name="Tegner J."/>
            <person name="Teichmann S.A."/>
            <person name="Ueda H.R."/>
            <person name="van Nimwegen E."/>
            <person name="Verardo R."/>
            <person name="Wei C.L."/>
            <person name="Yagi K."/>
            <person name="Yamanishi H."/>
            <person name="Zabarovsky E."/>
            <person name="Zhu S."/>
            <person name="Zimmer A."/>
            <person name="Hide W."/>
            <person name="Bult C."/>
            <person name="Grimmond S.M."/>
            <person name="Teasdale R.D."/>
            <person name="Liu E.T."/>
            <person name="Brusic V."/>
            <person name="Quackenbush J."/>
            <person name="Wahlestedt C."/>
            <person name="Mattick J.S."/>
            <person name="Hume D.A."/>
            <person name="Kai C."/>
            <person name="Sasaki D."/>
            <person name="Tomaru Y."/>
            <person name="Fukuda S."/>
            <person name="Kanamori-Katayama M."/>
            <person name="Suzuki M."/>
            <person name="Aoki J."/>
            <person name="Arakawa T."/>
            <person name="Iida J."/>
            <person name="Imamura K."/>
            <person name="Itoh M."/>
            <person name="Kato T."/>
            <person name="Kawaji H."/>
            <person name="Kawagashira N."/>
            <person name="Kawashima T."/>
            <person name="Kojima M."/>
            <person name="Kondo S."/>
            <person name="Konno H."/>
            <person name="Nakano K."/>
            <person name="Ninomiya N."/>
            <person name="Nishio T."/>
            <person name="Okada M."/>
            <person name="Plessy C."/>
            <person name="Shibata K."/>
            <person name="Shiraki T."/>
            <person name="Suzuki S."/>
            <person name="Tagami M."/>
            <person name="Waki K."/>
            <person name="Watahiki A."/>
            <person name="Okamura-Oho Y."/>
            <person name="Suzuki H."/>
            <person name="Kawai J."/>
            <person name="Hayashizaki Y."/>
        </authorList>
    </citation>
    <scope>NUCLEOTIDE SEQUENCE [LARGE SCALE MRNA] (ISOFORM 1)</scope>
    <source>
        <strain>C57BL/6J</strain>
        <tissue>Embryo</tissue>
    </source>
</reference>
<reference key="3">
    <citation type="journal article" date="2004" name="Genome Res.">
        <title>The status, quality, and expansion of the NIH full-length cDNA project: the Mammalian Gene Collection (MGC).</title>
        <authorList>
            <consortium name="The MGC Project Team"/>
        </authorList>
    </citation>
    <scope>NUCLEOTIDE SEQUENCE [LARGE SCALE MRNA] (ISOFORM 1)</scope>
    <source>
        <strain>FVB/N</strain>
        <tissue>Liver</tissue>
    </source>
</reference>
<reference key="4">
    <citation type="journal article" date="2009" name="Immunity">
        <title>The phagosomal proteome in interferon-gamma-activated macrophages.</title>
        <authorList>
            <person name="Trost M."/>
            <person name="English L."/>
            <person name="Lemieux S."/>
            <person name="Courcelles M."/>
            <person name="Desjardins M."/>
            <person name="Thibault P."/>
        </authorList>
    </citation>
    <scope>PHOSPHORYLATION [LARGE SCALE ANALYSIS] AT SER-505</scope>
    <scope>IDENTIFICATION BY MASS SPECTROMETRY [LARGE SCALE ANALYSIS]</scope>
</reference>
<reference key="5">
    <citation type="journal article" date="2010" name="Cell">
        <title>A tissue-specific atlas of mouse protein phosphorylation and expression.</title>
        <authorList>
            <person name="Huttlin E.L."/>
            <person name="Jedrychowski M.P."/>
            <person name="Elias J.E."/>
            <person name="Goswami T."/>
            <person name="Rad R."/>
            <person name="Beausoleil S.A."/>
            <person name="Villen J."/>
            <person name="Haas W."/>
            <person name="Sowa M.E."/>
            <person name="Gygi S.P."/>
        </authorList>
    </citation>
    <scope>PHOSPHORYLATION [LARGE SCALE ANALYSIS] AT SER-95; SER-493 AND SER-505</scope>
    <scope>IDENTIFICATION BY MASS SPECTROMETRY [LARGE SCALE ANALYSIS]</scope>
    <source>
        <tissue>Kidney</tissue>
        <tissue>Lung</tissue>
        <tissue>Pancreas</tissue>
        <tissue>Spleen</tissue>
    </source>
</reference>
<reference key="6">
    <citation type="journal article" date="2011" name="Oncogene">
        <title>GNL3L depletion destabilizes MDM2 and induces p53-dependent G2/M arrest.</title>
        <authorList>
            <person name="Meng L."/>
            <person name="Hsu J.K."/>
            <person name="Tsai R.Y."/>
        </authorList>
    </citation>
    <scope>FUNCTION</scope>
    <scope>INTERACTION WITH MDM2</scope>
    <scope>SUBCELLULAR LOCATION</scope>
    <scope>MUTAGENESIS OF GLY-256</scope>
</reference>
<proteinExistence type="evidence at protein level"/>
<dbReference type="EMBL" id="AY181025">
    <property type="protein sequence ID" value="AAO19472.1"/>
    <property type="molecule type" value="mRNA"/>
</dbReference>
<dbReference type="EMBL" id="AY185498">
    <property type="protein sequence ID" value="AAO19473.1"/>
    <property type="molecule type" value="mRNA"/>
</dbReference>
<dbReference type="EMBL" id="AK077523">
    <property type="protein sequence ID" value="BAC36844.1"/>
    <property type="molecule type" value="mRNA"/>
</dbReference>
<dbReference type="EMBL" id="BC037996">
    <property type="protein sequence ID" value="AAH37996.2"/>
    <property type="molecule type" value="mRNA"/>
</dbReference>
<dbReference type="CCDS" id="CCDS26905.1">
    <molecule id="Q8CI11-1"/>
</dbReference>
<dbReference type="RefSeq" id="NP_705775.2">
    <molecule id="Q8CI11-1"/>
    <property type="nucleotide sequence ID" value="NM_153547.6"/>
</dbReference>
<dbReference type="SMR" id="Q8CI11"/>
<dbReference type="BioGRID" id="205989">
    <property type="interactions" value="43"/>
</dbReference>
<dbReference type="FunCoup" id="Q8CI11">
    <property type="interactions" value="2185"/>
</dbReference>
<dbReference type="STRING" id="10090.ENSMUSP00000047119"/>
<dbReference type="GlyGen" id="Q8CI11">
    <property type="glycosylation" value="1 site, 1 O-linked glycan (1 site)"/>
</dbReference>
<dbReference type="iPTMnet" id="Q8CI11"/>
<dbReference type="PhosphoSitePlus" id="Q8CI11"/>
<dbReference type="SwissPalm" id="Q8CI11"/>
<dbReference type="jPOST" id="Q8CI11"/>
<dbReference type="PaxDb" id="10090-ENSMUSP00000047119"/>
<dbReference type="PeptideAtlas" id="Q8CI11"/>
<dbReference type="ProteomicsDB" id="263382">
    <molecule id="Q8CI11-1"/>
</dbReference>
<dbReference type="ProteomicsDB" id="263383">
    <molecule id="Q8CI11-2"/>
</dbReference>
<dbReference type="Pumba" id="Q8CI11"/>
<dbReference type="Antibodypedia" id="31298">
    <property type="antibodies" value="556 antibodies from 40 providers"/>
</dbReference>
<dbReference type="DNASU" id="30877"/>
<dbReference type="Ensembl" id="ENSMUST00000037739.8">
    <molecule id="Q8CI11-1"/>
    <property type="protein sequence ID" value="ENSMUSP00000047119.7"/>
    <property type="gene ID" value="ENSMUSG00000042354.8"/>
</dbReference>
<dbReference type="GeneID" id="30877"/>
<dbReference type="KEGG" id="mmu:30877"/>
<dbReference type="UCSC" id="uc007swi.3">
    <molecule id="Q8CI11-1"/>
    <property type="organism name" value="mouse"/>
</dbReference>
<dbReference type="AGR" id="MGI:1353651"/>
<dbReference type="CTD" id="26354"/>
<dbReference type="MGI" id="MGI:1353651">
    <property type="gene designation" value="Gnl3"/>
</dbReference>
<dbReference type="VEuPathDB" id="HostDB:ENSMUSG00000042354"/>
<dbReference type="eggNOG" id="KOG2484">
    <property type="taxonomic scope" value="Eukaryota"/>
</dbReference>
<dbReference type="GeneTree" id="ENSGT00940000158320"/>
<dbReference type="HOGENOM" id="CLU_011106_5_3_1"/>
<dbReference type="InParanoid" id="Q8CI11"/>
<dbReference type="OMA" id="FKLDGLW"/>
<dbReference type="OrthoDB" id="444945at2759"/>
<dbReference type="PhylomeDB" id="Q8CI11"/>
<dbReference type="TreeFam" id="TF313085"/>
<dbReference type="Reactome" id="R-MMU-6791226">
    <property type="pathway name" value="Major pathway of rRNA processing in the nucleolus and cytosol"/>
</dbReference>
<dbReference type="BioGRID-ORCS" id="30877">
    <property type="hits" value="23 hits in 79 CRISPR screens"/>
</dbReference>
<dbReference type="ChiTaRS" id="Gnl3">
    <property type="organism name" value="mouse"/>
</dbReference>
<dbReference type="PRO" id="PR:Q8CI11"/>
<dbReference type="Proteomes" id="UP000000589">
    <property type="component" value="Chromosome 14"/>
</dbReference>
<dbReference type="RNAct" id="Q8CI11">
    <property type="molecule type" value="protein"/>
</dbReference>
<dbReference type="Bgee" id="ENSMUSG00000042354">
    <property type="expression patterns" value="Expressed in embryonic post-anal tail and 95 other cell types or tissues"/>
</dbReference>
<dbReference type="ExpressionAtlas" id="Q8CI11">
    <property type="expression patterns" value="baseline and differential"/>
</dbReference>
<dbReference type="GO" id="GO:0005694">
    <property type="term" value="C:chromosome"/>
    <property type="evidence" value="ECO:0007669"/>
    <property type="project" value="Ensembl"/>
</dbReference>
<dbReference type="GO" id="GO:0030496">
    <property type="term" value="C:midbody"/>
    <property type="evidence" value="ECO:0007669"/>
    <property type="project" value="Ensembl"/>
</dbReference>
<dbReference type="GO" id="GO:0016604">
    <property type="term" value="C:nuclear body"/>
    <property type="evidence" value="ECO:0007669"/>
    <property type="project" value="Ensembl"/>
</dbReference>
<dbReference type="GO" id="GO:0005730">
    <property type="term" value="C:nucleolus"/>
    <property type="evidence" value="ECO:0000314"/>
    <property type="project" value="MGI"/>
</dbReference>
<dbReference type="GO" id="GO:0005654">
    <property type="term" value="C:nucleoplasm"/>
    <property type="evidence" value="ECO:0000314"/>
    <property type="project" value="MGI"/>
</dbReference>
<dbReference type="GO" id="GO:0005634">
    <property type="term" value="C:nucleus"/>
    <property type="evidence" value="ECO:0000250"/>
    <property type="project" value="UniProtKB"/>
</dbReference>
<dbReference type="GO" id="GO:0005525">
    <property type="term" value="F:GTP binding"/>
    <property type="evidence" value="ECO:0000314"/>
    <property type="project" value="MGI"/>
</dbReference>
<dbReference type="GO" id="GO:0048027">
    <property type="term" value="F:mRNA 5'-UTR binding"/>
    <property type="evidence" value="ECO:0007669"/>
    <property type="project" value="Ensembl"/>
</dbReference>
<dbReference type="GO" id="GO:1902895">
    <property type="term" value="P:positive regulation of miRNA transcription"/>
    <property type="evidence" value="ECO:0007669"/>
    <property type="project" value="Ensembl"/>
</dbReference>
<dbReference type="GO" id="GO:1904816">
    <property type="term" value="P:positive regulation of protein localization to chromosome, telomeric region"/>
    <property type="evidence" value="ECO:0007669"/>
    <property type="project" value="Ensembl"/>
</dbReference>
<dbReference type="GO" id="GO:0033235">
    <property type="term" value="P:positive regulation of protein sumoylation"/>
    <property type="evidence" value="ECO:0007669"/>
    <property type="project" value="Ensembl"/>
</dbReference>
<dbReference type="GO" id="GO:0032206">
    <property type="term" value="P:positive regulation of telomere maintenance"/>
    <property type="evidence" value="ECO:0007669"/>
    <property type="project" value="Ensembl"/>
</dbReference>
<dbReference type="GO" id="GO:0042127">
    <property type="term" value="P:regulation of cell population proliferation"/>
    <property type="evidence" value="ECO:0000250"/>
    <property type="project" value="UniProtKB"/>
</dbReference>
<dbReference type="GO" id="GO:0017145">
    <property type="term" value="P:stem cell division"/>
    <property type="evidence" value="ECO:0007669"/>
    <property type="project" value="Ensembl"/>
</dbReference>
<dbReference type="GO" id="GO:0019827">
    <property type="term" value="P:stem cell population maintenance"/>
    <property type="evidence" value="ECO:0007669"/>
    <property type="project" value="Ensembl"/>
</dbReference>
<dbReference type="CDD" id="cd04178">
    <property type="entry name" value="Nucleostemin_like"/>
    <property type="match status" value="1"/>
</dbReference>
<dbReference type="FunFam" id="3.40.50.300:FF:001106">
    <property type="entry name" value="Guanine nucleotide-binding protein-like 3"/>
    <property type="match status" value="1"/>
</dbReference>
<dbReference type="Gene3D" id="1.10.1580.10">
    <property type="match status" value="1"/>
</dbReference>
<dbReference type="Gene3D" id="3.40.50.300">
    <property type="entry name" value="P-loop containing nucleotide triphosphate hydrolases"/>
    <property type="match status" value="1"/>
</dbReference>
<dbReference type="InterPro" id="IPR030378">
    <property type="entry name" value="G_CP_dom"/>
</dbReference>
<dbReference type="InterPro" id="IPR014813">
    <property type="entry name" value="Gnl3_N_dom"/>
</dbReference>
<dbReference type="InterPro" id="IPR006073">
    <property type="entry name" value="GTP-bd"/>
</dbReference>
<dbReference type="InterPro" id="IPR023179">
    <property type="entry name" value="GTP-bd_ortho_bundle_sf"/>
</dbReference>
<dbReference type="InterPro" id="IPR027417">
    <property type="entry name" value="P-loop_NTPase"/>
</dbReference>
<dbReference type="InterPro" id="IPR050755">
    <property type="entry name" value="TRAFAC_YlqF/YawG_RiboMat"/>
</dbReference>
<dbReference type="PANTHER" id="PTHR11089">
    <property type="entry name" value="GTP-BINDING PROTEIN-RELATED"/>
    <property type="match status" value="1"/>
</dbReference>
<dbReference type="PANTHER" id="PTHR11089:SF11">
    <property type="entry name" value="GUANINE NUCLEOTIDE-BINDING PROTEIN-LIKE 3"/>
    <property type="match status" value="1"/>
</dbReference>
<dbReference type="Pfam" id="PF08701">
    <property type="entry name" value="GN3L_Grn1"/>
    <property type="match status" value="1"/>
</dbReference>
<dbReference type="Pfam" id="PF01926">
    <property type="entry name" value="MMR_HSR1"/>
    <property type="match status" value="1"/>
</dbReference>
<dbReference type="SUPFAM" id="SSF52540">
    <property type="entry name" value="P-loop containing nucleoside triphosphate hydrolases"/>
    <property type="match status" value="1"/>
</dbReference>
<dbReference type="PROSITE" id="PS51721">
    <property type="entry name" value="G_CP"/>
    <property type="match status" value="1"/>
</dbReference>
<feature type="chain" id="PRO_0000122445" description="Guanine nucleotide-binding protein-like 3">
    <location>
        <begin position="1"/>
        <end position="538"/>
    </location>
</feature>
<feature type="domain" description="CP-type G" evidence="5">
    <location>
        <begin position="129"/>
        <end position="307"/>
    </location>
</feature>
<feature type="region of interest" description="Disordered" evidence="6">
    <location>
        <begin position="1"/>
        <end position="57"/>
    </location>
</feature>
<feature type="region of interest" description="Basic" evidence="1">
    <location>
        <begin position="2"/>
        <end position="46"/>
    </location>
</feature>
<feature type="region of interest" description="Disordered" evidence="6">
    <location>
        <begin position="69"/>
        <end position="126"/>
    </location>
</feature>
<feature type="region of interest" description="Intermediate" evidence="1">
    <location>
        <begin position="277"/>
        <end position="451"/>
    </location>
</feature>
<feature type="region of interest" description="Disordered" evidence="6">
    <location>
        <begin position="460"/>
        <end position="538"/>
    </location>
</feature>
<feature type="region of interest" description="Acidic" evidence="1">
    <location>
        <begin position="460"/>
        <end position="532"/>
    </location>
</feature>
<feature type="coiled-coil region" evidence="4">
    <location>
        <begin position="54"/>
        <end position="95"/>
    </location>
</feature>
<feature type="compositionally biased region" description="Basic residues" evidence="6">
    <location>
        <begin position="1"/>
        <end position="45"/>
    </location>
</feature>
<feature type="compositionally biased region" description="Basic and acidic residues" evidence="6">
    <location>
        <begin position="69"/>
        <end position="93"/>
    </location>
</feature>
<feature type="compositionally biased region" description="Basic residues" evidence="6">
    <location>
        <begin position="114"/>
        <end position="126"/>
    </location>
</feature>
<feature type="compositionally biased region" description="Basic and acidic residues" evidence="6">
    <location>
        <begin position="460"/>
        <end position="475"/>
    </location>
</feature>
<feature type="compositionally biased region" description="Polar residues" evidence="6">
    <location>
        <begin position="506"/>
        <end position="518"/>
    </location>
</feature>
<feature type="binding site" evidence="4">
    <location>
        <begin position="176"/>
        <end position="179"/>
    </location>
    <ligand>
        <name>GTP</name>
        <dbReference type="ChEBI" id="CHEBI:37565"/>
    </ligand>
</feature>
<feature type="binding site" evidence="4">
    <location>
        <begin position="256"/>
        <end position="263"/>
    </location>
    <ligand>
        <name>GTP</name>
        <dbReference type="ChEBI" id="CHEBI:37565"/>
    </ligand>
</feature>
<feature type="binding site" evidence="4">
    <location>
        <begin position="300"/>
        <end position="303"/>
    </location>
    <ligand>
        <name>GTP</name>
        <dbReference type="ChEBI" id="CHEBI:37565"/>
    </ligand>
</feature>
<feature type="modified residue" description="N6-acetyllysine" evidence="3">
    <location>
        <position position="79"/>
    </location>
</feature>
<feature type="modified residue" description="Phosphoserine" evidence="12">
    <location>
        <position position="95"/>
    </location>
</feature>
<feature type="modified residue" description="Phosphoserine" evidence="2">
    <location>
        <position position="101"/>
    </location>
</feature>
<feature type="modified residue" description="Phosphoserine" evidence="12">
    <location>
        <position position="493"/>
    </location>
</feature>
<feature type="modified residue" description="Phosphoserine" evidence="11 12">
    <location>
        <position position="505"/>
    </location>
</feature>
<feature type="modified residue" description="Phosphoserine" evidence="3">
    <location>
        <position position="518"/>
    </location>
</feature>
<feature type="cross-link" description="Glycyl lysine isopeptide (Lys-Gly) (interchain with G-Cter in SUMO2)" evidence="3">
    <location>
        <position position="91"/>
    </location>
</feature>
<feature type="cross-link" description="Glycyl lysine isopeptide (Lys-Gly) (interchain with G-Cter in SUMO2)" evidence="3">
    <location>
        <position position="177"/>
    </location>
</feature>
<feature type="cross-link" description="Glycyl lysine isopeptide (Lys-Gly) (interchain with G-Cter in SUMO2)" evidence="3">
    <location>
        <position position="248"/>
    </location>
</feature>
<feature type="cross-link" description="Glycyl lysine isopeptide (Lys-Gly) (interchain with G-Cter in SUMO2)" evidence="3">
    <location>
        <position position="262"/>
    </location>
</feature>
<feature type="cross-link" description="Glycyl lysine isopeptide (Lys-Gly) (interchain with G-Cter in SUMO2)" evidence="3">
    <location>
        <position position="270"/>
    </location>
</feature>
<feature type="splice variant" id="VSP_013412" description="In isoform 2." evidence="9">
    <location>
        <begin position="465"/>
        <end position="497"/>
    </location>
</feature>
<feature type="mutagenesis site" description="Mislocalized to the nucleoplasm. No effect on MDM2-binding." evidence="8">
    <original>G</original>
    <variation>V</variation>
    <location>
        <position position="256"/>
    </location>
</feature>
<feature type="sequence conflict" description="In Ref. 1; AAO19472." evidence="10" ref="1">
    <original>R</original>
    <variation>S</variation>
    <location>
        <position position="470"/>
    </location>
</feature>
<feature type="sequence conflict" description="In Ref. 1; AAO19472." evidence="10" ref="1">
    <original>K</original>
    <variation>Q</variation>
    <location>
        <position position="475"/>
    </location>
</feature>
<name>GNL3_MOUSE</name>
<evidence type="ECO:0000250" key="1"/>
<evidence type="ECO:0000250" key="2">
    <source>
        <dbReference type="UniProtKB" id="Q811S9"/>
    </source>
</evidence>
<evidence type="ECO:0000250" key="3">
    <source>
        <dbReference type="UniProtKB" id="Q9BVP2"/>
    </source>
</evidence>
<evidence type="ECO:0000255" key="4"/>
<evidence type="ECO:0000255" key="5">
    <source>
        <dbReference type="PROSITE-ProRule" id="PRU01058"/>
    </source>
</evidence>
<evidence type="ECO:0000256" key="6">
    <source>
        <dbReference type="SAM" id="MobiDB-lite"/>
    </source>
</evidence>
<evidence type="ECO:0000269" key="7">
    <source>
    </source>
</evidence>
<evidence type="ECO:0000269" key="8">
    <source>
    </source>
</evidence>
<evidence type="ECO:0000303" key="9">
    <source>
    </source>
</evidence>
<evidence type="ECO:0000305" key="10"/>
<evidence type="ECO:0007744" key="11">
    <source>
    </source>
</evidence>
<evidence type="ECO:0007744" key="12">
    <source>
    </source>
</evidence>
<accession>Q8CI11</accession>
<accession>Q811R9</accession>
<accession>Q811S8</accession>
<accession>Q8BK21</accession>
<sequence length="538" mass="60786">MKRPKLKKASKRMTCHKRYKIQKKVREHHRKLRKEAKKRGHKKPRKDPGVPNSAPFKEALLREAELRKQQLEELKQQQKLDRQKEQERKRKLEVSPGDEQSNVETREESDEPKRKKAKAGKQNPKKLHCQELKKVIEASDIVLEVLDARDPLGCRCPQIEEAVIQSGSKKLILVLNKSDLVPKENLENWLNYLNKELPTVVFKASTNLKNRKTFKIKKKKVVPFQSKICCGKEALWKLLGDFQQSCGKDIQVGVIGFPNVGKSSVINSLKQEWICNVGISMGLTRSMQIVPLDKQITIIDSPCLIISPCNSPTALALRSPASIEELRPLEAASAILSQADNEQVVLKYTVPEYKDSLHFFTKLAQRRGLHQKGGSPNVESAAKLVWSEWTGASLGYYCHPPASWNHSLHFNENIAAVMKKGFNLEELEKNNAHSIQVLKGPHLTNRILFRSSGLTNGILDEKDIVEESPRQTEDKQDADDQENGSGERNAEISDVAPVEETRELSPEQSTAGKPSDGSSALDRASQEDETYDFTTDYI</sequence>
<protein>
    <recommendedName>
        <fullName>Guanine nucleotide-binding protein-like 3</fullName>
    </recommendedName>
    <alternativeName>
        <fullName>Nucleolar GTP-binding protein 3</fullName>
    </alternativeName>
    <alternativeName>
        <fullName>Nucleostemin</fullName>
    </alternativeName>
</protein>
<keyword id="KW-0007">Acetylation</keyword>
<keyword id="KW-0025">Alternative splicing</keyword>
<keyword id="KW-0175">Coiled coil</keyword>
<keyword id="KW-0342">GTP-binding</keyword>
<keyword id="KW-1017">Isopeptide bond</keyword>
<keyword id="KW-0547">Nucleotide-binding</keyword>
<keyword id="KW-0539">Nucleus</keyword>
<keyword id="KW-0597">Phosphoprotein</keyword>
<keyword id="KW-1185">Reference proteome</keyword>
<keyword id="KW-0832">Ubl conjugation</keyword>
<organism>
    <name type="scientific">Mus musculus</name>
    <name type="common">Mouse</name>
    <dbReference type="NCBI Taxonomy" id="10090"/>
    <lineage>
        <taxon>Eukaryota</taxon>
        <taxon>Metazoa</taxon>
        <taxon>Chordata</taxon>
        <taxon>Craniata</taxon>
        <taxon>Vertebrata</taxon>
        <taxon>Euteleostomi</taxon>
        <taxon>Mammalia</taxon>
        <taxon>Eutheria</taxon>
        <taxon>Euarchontoglires</taxon>
        <taxon>Glires</taxon>
        <taxon>Rodentia</taxon>
        <taxon>Myomorpha</taxon>
        <taxon>Muroidea</taxon>
        <taxon>Muridae</taxon>
        <taxon>Murinae</taxon>
        <taxon>Mus</taxon>
        <taxon>Mus</taxon>
    </lineage>
</organism>
<gene>
    <name type="primary">Gnl3</name>
    <name type="synonym">Ns</name>
</gene>